<gene>
    <name evidence="1" type="primary">fdhD</name>
    <name type="ordered locus">KPN78578_41460</name>
    <name type="ORF">KPN_04191</name>
</gene>
<comment type="function">
    <text evidence="1">Required for formate dehydrogenase (FDH) activity. Acts as a sulfur carrier protein that transfers sulfur from IscS to the molybdenum cofactor prior to its insertion into FDH.</text>
</comment>
<comment type="subcellular location">
    <subcellularLocation>
        <location evidence="1">Cytoplasm</location>
    </subcellularLocation>
</comment>
<comment type="similarity">
    <text evidence="1">Belongs to the FdhD family.</text>
</comment>
<evidence type="ECO:0000255" key="1">
    <source>
        <dbReference type="HAMAP-Rule" id="MF_00187"/>
    </source>
</evidence>
<proteinExistence type="inferred from homology"/>
<reference key="1">
    <citation type="submission" date="2006-09" db="EMBL/GenBank/DDBJ databases">
        <authorList>
            <consortium name="The Klebsiella pneumonia Genome Sequencing Project"/>
            <person name="McClelland M."/>
            <person name="Sanderson E.K."/>
            <person name="Spieth J."/>
            <person name="Clifton W.S."/>
            <person name="Latreille P."/>
            <person name="Sabo A."/>
            <person name="Pepin K."/>
            <person name="Bhonagiri V."/>
            <person name="Porwollik S."/>
            <person name="Ali J."/>
            <person name="Wilson R.K."/>
        </authorList>
    </citation>
    <scope>NUCLEOTIDE SEQUENCE [LARGE SCALE GENOMIC DNA]</scope>
    <source>
        <strain>ATCC 700721 / MGH 78578</strain>
    </source>
</reference>
<sequence>MNKKPLEQIKNVTNVTGYRQVSLWKREDLQHPQPDELAEEVPVALVYNGISHVVMMASPKDLEQFAVGFSLSEGIIEHRREIFGMDVVAVCNGLEVQIELSSRRFMGLKARRRALAGRTGCGVCGVEQLNDIGKPVQPLPFTQSFDLANLDQALAHLNDFQPVGRLTGCTHAAAWVRLTGELAGGFEDVGRHVALDKLLGRRAEVGEGWQHGAALVSSRASYEMVQKAAMCGVEILFAVSAATTLAVEVAERCNLTLVGFCKPGRATVYTHPQRLIAG</sequence>
<protein>
    <recommendedName>
        <fullName evidence="1">Sulfur carrier protein FdhD</fullName>
    </recommendedName>
</protein>
<feature type="chain" id="PRO_1000020817" description="Sulfur carrier protein FdhD">
    <location>
        <begin position="1"/>
        <end position="278"/>
    </location>
</feature>
<feature type="active site" description="Cysteine persulfide intermediate" evidence="1">
    <location>
        <position position="121"/>
    </location>
</feature>
<feature type="binding site" evidence="1">
    <location>
        <begin position="260"/>
        <end position="265"/>
    </location>
    <ligand>
        <name>Mo-bis(molybdopterin guanine dinucleotide)</name>
        <dbReference type="ChEBI" id="CHEBI:60539"/>
    </ligand>
</feature>
<name>FDHD_KLEP7</name>
<keyword id="KW-0963">Cytoplasm</keyword>
<keyword id="KW-0501">Molybdenum cofactor biosynthesis</keyword>
<dbReference type="EMBL" id="CP000647">
    <property type="protein sequence ID" value="ABR79570.1"/>
    <property type="molecule type" value="Genomic_DNA"/>
</dbReference>
<dbReference type="RefSeq" id="WP_002882828.1">
    <property type="nucleotide sequence ID" value="NC_009648.1"/>
</dbReference>
<dbReference type="SMR" id="A6TG86"/>
<dbReference type="STRING" id="272620.KPN_04191"/>
<dbReference type="PaxDb" id="272620-KPN_04191"/>
<dbReference type="EnsemblBacteria" id="ABR79570">
    <property type="protein sequence ID" value="ABR79570"/>
    <property type="gene ID" value="KPN_04191"/>
</dbReference>
<dbReference type="GeneID" id="69757929"/>
<dbReference type="KEGG" id="kpn:KPN_04191"/>
<dbReference type="HOGENOM" id="CLU_056887_2_0_6"/>
<dbReference type="Proteomes" id="UP000000265">
    <property type="component" value="Chromosome"/>
</dbReference>
<dbReference type="GO" id="GO:0005737">
    <property type="term" value="C:cytoplasm"/>
    <property type="evidence" value="ECO:0007669"/>
    <property type="project" value="UniProtKB-SubCell"/>
</dbReference>
<dbReference type="GO" id="GO:0097163">
    <property type="term" value="F:sulfur carrier activity"/>
    <property type="evidence" value="ECO:0007669"/>
    <property type="project" value="UniProtKB-UniRule"/>
</dbReference>
<dbReference type="GO" id="GO:0016783">
    <property type="term" value="F:sulfurtransferase activity"/>
    <property type="evidence" value="ECO:0007669"/>
    <property type="project" value="InterPro"/>
</dbReference>
<dbReference type="GO" id="GO:0006777">
    <property type="term" value="P:Mo-molybdopterin cofactor biosynthetic process"/>
    <property type="evidence" value="ECO:0007669"/>
    <property type="project" value="UniProtKB-UniRule"/>
</dbReference>
<dbReference type="Gene3D" id="3.10.20.10">
    <property type="match status" value="1"/>
</dbReference>
<dbReference type="Gene3D" id="3.40.140.10">
    <property type="entry name" value="Cytidine Deaminase, domain 2"/>
    <property type="match status" value="1"/>
</dbReference>
<dbReference type="HAMAP" id="MF_00187">
    <property type="entry name" value="FdhD"/>
    <property type="match status" value="1"/>
</dbReference>
<dbReference type="InterPro" id="IPR016193">
    <property type="entry name" value="Cytidine_deaminase-like"/>
</dbReference>
<dbReference type="InterPro" id="IPR003786">
    <property type="entry name" value="FdhD"/>
</dbReference>
<dbReference type="NCBIfam" id="TIGR00129">
    <property type="entry name" value="fdhD_narQ"/>
    <property type="match status" value="1"/>
</dbReference>
<dbReference type="PANTHER" id="PTHR30592">
    <property type="entry name" value="FORMATE DEHYDROGENASE"/>
    <property type="match status" value="1"/>
</dbReference>
<dbReference type="PANTHER" id="PTHR30592:SF1">
    <property type="entry name" value="SULFUR CARRIER PROTEIN FDHD"/>
    <property type="match status" value="1"/>
</dbReference>
<dbReference type="Pfam" id="PF02634">
    <property type="entry name" value="FdhD-NarQ"/>
    <property type="match status" value="1"/>
</dbReference>
<dbReference type="PIRSF" id="PIRSF015626">
    <property type="entry name" value="FdhD"/>
    <property type="match status" value="1"/>
</dbReference>
<dbReference type="SUPFAM" id="SSF53927">
    <property type="entry name" value="Cytidine deaminase-like"/>
    <property type="match status" value="1"/>
</dbReference>
<accession>A6TG86</accession>
<organism>
    <name type="scientific">Klebsiella pneumoniae subsp. pneumoniae (strain ATCC 700721 / MGH 78578)</name>
    <dbReference type="NCBI Taxonomy" id="272620"/>
    <lineage>
        <taxon>Bacteria</taxon>
        <taxon>Pseudomonadati</taxon>
        <taxon>Pseudomonadota</taxon>
        <taxon>Gammaproteobacteria</taxon>
        <taxon>Enterobacterales</taxon>
        <taxon>Enterobacteriaceae</taxon>
        <taxon>Klebsiella/Raoultella group</taxon>
        <taxon>Klebsiella</taxon>
        <taxon>Klebsiella pneumoniae complex</taxon>
    </lineage>
</organism>